<name>RS4_PARM1</name>
<keyword id="KW-0687">Ribonucleoprotein</keyword>
<keyword id="KW-0689">Ribosomal protein</keyword>
<keyword id="KW-0694">RNA-binding</keyword>
<keyword id="KW-0699">rRNA-binding</keyword>
<feature type="chain" id="PRO_0000293307" description="Small ribosomal subunit protein uS4">
    <location>
        <begin position="1"/>
        <end position="205"/>
    </location>
</feature>
<feature type="domain" description="S4 RNA-binding" evidence="1">
    <location>
        <begin position="94"/>
        <end position="154"/>
    </location>
</feature>
<feature type="region of interest" description="Disordered" evidence="2">
    <location>
        <begin position="20"/>
        <end position="47"/>
    </location>
</feature>
<sequence length="205" mass="23562">MSKRIEAKYKINRRLGANLWGRSKSPLNRGKENPPGQHGQRRKKPSDFGTQLMAKQKLKGYYGNISEKQFRRLYDEAVRRRGDTSENLIGLLECRLDAVVYRLKFAPTPFAARQLVNHCHILVNGKRVNIPSYRVNEGDVISVKTKSKDMALILEAAQSGERDVPDYMEVDHKEMKGKFVRIPKLGDVPYAVQMEPNLVVEFYSR</sequence>
<dbReference type="EMBL" id="AP007255">
    <property type="protein sequence ID" value="BAE50932.1"/>
    <property type="molecule type" value="Genomic_DNA"/>
</dbReference>
<dbReference type="RefSeq" id="WP_011384527.1">
    <property type="nucleotide sequence ID" value="NC_007626.1"/>
</dbReference>
<dbReference type="SMR" id="Q2W5E3"/>
<dbReference type="STRING" id="342108.amb2128"/>
<dbReference type="KEGG" id="mag:amb2128"/>
<dbReference type="HOGENOM" id="CLU_092403_0_0_5"/>
<dbReference type="OrthoDB" id="9803672at2"/>
<dbReference type="Proteomes" id="UP000007058">
    <property type="component" value="Chromosome"/>
</dbReference>
<dbReference type="GO" id="GO:0015935">
    <property type="term" value="C:small ribosomal subunit"/>
    <property type="evidence" value="ECO:0007669"/>
    <property type="project" value="InterPro"/>
</dbReference>
<dbReference type="GO" id="GO:0019843">
    <property type="term" value="F:rRNA binding"/>
    <property type="evidence" value="ECO:0007669"/>
    <property type="project" value="UniProtKB-UniRule"/>
</dbReference>
<dbReference type="GO" id="GO:0003735">
    <property type="term" value="F:structural constituent of ribosome"/>
    <property type="evidence" value="ECO:0007669"/>
    <property type="project" value="InterPro"/>
</dbReference>
<dbReference type="GO" id="GO:0042274">
    <property type="term" value="P:ribosomal small subunit biogenesis"/>
    <property type="evidence" value="ECO:0007669"/>
    <property type="project" value="TreeGrafter"/>
</dbReference>
<dbReference type="GO" id="GO:0006412">
    <property type="term" value="P:translation"/>
    <property type="evidence" value="ECO:0007669"/>
    <property type="project" value="UniProtKB-UniRule"/>
</dbReference>
<dbReference type="CDD" id="cd00165">
    <property type="entry name" value="S4"/>
    <property type="match status" value="1"/>
</dbReference>
<dbReference type="FunFam" id="3.10.290.10:FF:000001">
    <property type="entry name" value="30S ribosomal protein S4"/>
    <property type="match status" value="1"/>
</dbReference>
<dbReference type="Gene3D" id="1.10.1050.10">
    <property type="entry name" value="Ribosomal Protein S4 Delta 41, Chain A, domain 1"/>
    <property type="match status" value="1"/>
</dbReference>
<dbReference type="Gene3D" id="3.10.290.10">
    <property type="entry name" value="RNA-binding S4 domain"/>
    <property type="match status" value="1"/>
</dbReference>
<dbReference type="HAMAP" id="MF_01306_B">
    <property type="entry name" value="Ribosomal_uS4_B"/>
    <property type="match status" value="1"/>
</dbReference>
<dbReference type="InterPro" id="IPR022801">
    <property type="entry name" value="Ribosomal_uS4"/>
</dbReference>
<dbReference type="InterPro" id="IPR005709">
    <property type="entry name" value="Ribosomal_uS4_bac-type"/>
</dbReference>
<dbReference type="InterPro" id="IPR018079">
    <property type="entry name" value="Ribosomal_uS4_CS"/>
</dbReference>
<dbReference type="InterPro" id="IPR001912">
    <property type="entry name" value="Ribosomal_uS4_N"/>
</dbReference>
<dbReference type="InterPro" id="IPR002942">
    <property type="entry name" value="S4_RNA-bd"/>
</dbReference>
<dbReference type="InterPro" id="IPR036986">
    <property type="entry name" value="S4_RNA-bd_sf"/>
</dbReference>
<dbReference type="NCBIfam" id="NF003717">
    <property type="entry name" value="PRK05327.1"/>
    <property type="match status" value="1"/>
</dbReference>
<dbReference type="NCBIfam" id="TIGR01017">
    <property type="entry name" value="rpsD_bact"/>
    <property type="match status" value="1"/>
</dbReference>
<dbReference type="PANTHER" id="PTHR11831">
    <property type="entry name" value="30S 40S RIBOSOMAL PROTEIN"/>
    <property type="match status" value="1"/>
</dbReference>
<dbReference type="PANTHER" id="PTHR11831:SF4">
    <property type="entry name" value="SMALL RIBOSOMAL SUBUNIT PROTEIN US4M"/>
    <property type="match status" value="1"/>
</dbReference>
<dbReference type="Pfam" id="PF00163">
    <property type="entry name" value="Ribosomal_S4"/>
    <property type="match status" value="1"/>
</dbReference>
<dbReference type="Pfam" id="PF01479">
    <property type="entry name" value="S4"/>
    <property type="match status" value="1"/>
</dbReference>
<dbReference type="SMART" id="SM01390">
    <property type="entry name" value="Ribosomal_S4"/>
    <property type="match status" value="1"/>
</dbReference>
<dbReference type="SMART" id="SM00363">
    <property type="entry name" value="S4"/>
    <property type="match status" value="1"/>
</dbReference>
<dbReference type="SUPFAM" id="SSF55174">
    <property type="entry name" value="Alpha-L RNA-binding motif"/>
    <property type="match status" value="1"/>
</dbReference>
<dbReference type="PROSITE" id="PS00632">
    <property type="entry name" value="RIBOSOMAL_S4"/>
    <property type="match status" value="1"/>
</dbReference>
<dbReference type="PROSITE" id="PS50889">
    <property type="entry name" value="S4"/>
    <property type="match status" value="1"/>
</dbReference>
<organism>
    <name type="scientific">Paramagnetospirillum magneticum (strain ATCC 700264 / AMB-1)</name>
    <name type="common">Magnetospirillum magneticum</name>
    <dbReference type="NCBI Taxonomy" id="342108"/>
    <lineage>
        <taxon>Bacteria</taxon>
        <taxon>Pseudomonadati</taxon>
        <taxon>Pseudomonadota</taxon>
        <taxon>Alphaproteobacteria</taxon>
        <taxon>Rhodospirillales</taxon>
        <taxon>Magnetospirillaceae</taxon>
        <taxon>Paramagnetospirillum</taxon>
    </lineage>
</organism>
<accession>Q2W5E3</accession>
<proteinExistence type="inferred from homology"/>
<gene>
    <name evidence="1" type="primary">rpsD</name>
    <name type="ordered locus">amb2128</name>
</gene>
<evidence type="ECO:0000255" key="1">
    <source>
        <dbReference type="HAMAP-Rule" id="MF_01306"/>
    </source>
</evidence>
<evidence type="ECO:0000256" key="2">
    <source>
        <dbReference type="SAM" id="MobiDB-lite"/>
    </source>
</evidence>
<evidence type="ECO:0000305" key="3"/>
<protein>
    <recommendedName>
        <fullName evidence="1">Small ribosomal subunit protein uS4</fullName>
    </recommendedName>
    <alternativeName>
        <fullName evidence="3">30S ribosomal protein S4</fullName>
    </alternativeName>
</protein>
<comment type="function">
    <text evidence="1">One of the primary rRNA binding proteins, it binds directly to 16S rRNA where it nucleates assembly of the body of the 30S subunit.</text>
</comment>
<comment type="function">
    <text evidence="1">With S5 and S12 plays an important role in translational accuracy.</text>
</comment>
<comment type="subunit">
    <text evidence="1">Part of the 30S ribosomal subunit. Contacts protein S5. The interaction surface between S4 and S5 is involved in control of translational fidelity.</text>
</comment>
<comment type="similarity">
    <text evidence="1">Belongs to the universal ribosomal protein uS4 family.</text>
</comment>
<reference key="1">
    <citation type="journal article" date="2005" name="DNA Res.">
        <title>Complete genome sequence of the facultative anaerobic magnetotactic bacterium Magnetospirillum sp. strain AMB-1.</title>
        <authorList>
            <person name="Matsunaga T."/>
            <person name="Okamura Y."/>
            <person name="Fukuda Y."/>
            <person name="Wahyudi A.T."/>
            <person name="Murase Y."/>
            <person name="Takeyama H."/>
        </authorList>
    </citation>
    <scope>NUCLEOTIDE SEQUENCE [LARGE SCALE GENOMIC DNA]</scope>
    <source>
        <strain>ATCC 700264 / AMB-1</strain>
    </source>
</reference>